<keyword id="KW-0002">3D-structure</keyword>
<keyword id="KW-0025">Alternative splicing</keyword>
<keyword id="KW-0963">Cytoplasm</keyword>
<keyword id="KW-0223">Dioxygenase</keyword>
<keyword id="KW-0225">Disease variant</keyword>
<keyword id="KW-0276">Fatty acid metabolism</keyword>
<keyword id="KW-0977">Ichthyosis</keyword>
<keyword id="KW-0408">Iron</keyword>
<keyword id="KW-0413">Isomerase</keyword>
<keyword id="KW-0443">Lipid metabolism</keyword>
<keyword id="KW-0456">Lyase</keyword>
<keyword id="KW-0479">Metal-binding</keyword>
<keyword id="KW-0560">Oxidoreductase</keyword>
<keyword id="KW-1267">Proteomics identification</keyword>
<keyword id="KW-1185">Reference proteome</keyword>
<dbReference type="EC" id="4.2.1.152" evidence="6 14"/>
<dbReference type="EC" id="5.4.4.7" evidence="6 9 14"/>
<dbReference type="EMBL" id="AJ269499">
    <property type="protein sequence ID" value="CAC12843.1"/>
    <property type="molecule type" value="mRNA"/>
</dbReference>
<dbReference type="EMBL" id="AJ305020">
    <property type="protein sequence ID" value="CAC34518.1"/>
    <property type="molecule type" value="Genomic_DNA"/>
</dbReference>
<dbReference type="EMBL" id="AJ305021">
    <property type="protein sequence ID" value="CAC34518.1"/>
    <property type="status" value="JOINED"/>
    <property type="molecule type" value="Genomic_DNA"/>
</dbReference>
<dbReference type="EMBL" id="AJ305023">
    <property type="protein sequence ID" value="CAC34518.1"/>
    <property type="status" value="JOINED"/>
    <property type="molecule type" value="Genomic_DNA"/>
</dbReference>
<dbReference type="EMBL" id="AJ305025">
    <property type="protein sequence ID" value="CAC34518.1"/>
    <property type="status" value="JOINED"/>
    <property type="molecule type" value="Genomic_DNA"/>
</dbReference>
<dbReference type="EMBL" id="AF182218">
    <property type="protein sequence ID" value="AAG16899.1"/>
    <property type="molecule type" value="mRNA"/>
</dbReference>
<dbReference type="EMBL" id="AK296416">
    <property type="protein sequence ID" value="BAH12346.1"/>
    <property type="molecule type" value="mRNA"/>
</dbReference>
<dbReference type="EMBL" id="AK313677">
    <property type="protein sequence ID" value="BAG36428.1"/>
    <property type="molecule type" value="mRNA"/>
</dbReference>
<dbReference type="EMBL" id="CH471108">
    <property type="protein sequence ID" value="EAW90094.1"/>
    <property type="molecule type" value="Genomic_DNA"/>
</dbReference>
<dbReference type="EMBL" id="BC101938">
    <property type="protein sequence ID" value="AAI01939.1"/>
    <property type="molecule type" value="mRNA"/>
</dbReference>
<dbReference type="EMBL" id="BC101939">
    <property type="protein sequence ID" value="AAI01940.1"/>
    <property type="molecule type" value="mRNA"/>
</dbReference>
<dbReference type="EMBL" id="BC103508">
    <property type="protein sequence ID" value="AAI03509.1"/>
    <property type="molecule type" value="mRNA"/>
</dbReference>
<dbReference type="EMBL" id="BC104724">
    <property type="protein sequence ID" value="AAI04725.1"/>
    <property type="molecule type" value="mRNA"/>
</dbReference>
<dbReference type="CCDS" id="CCDS11130.1">
    <molecule id="Q9BYJ1-1"/>
</dbReference>
<dbReference type="RefSeq" id="NP_001159432.1">
    <molecule id="Q9BYJ1-2"/>
    <property type="nucleotide sequence ID" value="NM_001165960.1"/>
</dbReference>
<dbReference type="RefSeq" id="NP_067641.2">
    <molecule id="Q9BYJ1-1"/>
    <property type="nucleotide sequence ID" value="NM_021628.3"/>
</dbReference>
<dbReference type="PDB" id="6VB2">
    <property type="method" value="X-ray"/>
    <property type="resolution" value="1.41 A"/>
    <property type="chains" value="C=136-144"/>
</dbReference>
<dbReference type="PDBsum" id="6VB2"/>
<dbReference type="SMR" id="Q9BYJ1"/>
<dbReference type="BioGRID" id="121886">
    <property type="interactions" value="66"/>
</dbReference>
<dbReference type="FunCoup" id="Q9BYJ1">
    <property type="interactions" value="500"/>
</dbReference>
<dbReference type="IntAct" id="Q9BYJ1">
    <property type="interactions" value="47"/>
</dbReference>
<dbReference type="STRING" id="9606.ENSP00000314879"/>
<dbReference type="SwissLipids" id="SLP:000000656"/>
<dbReference type="iPTMnet" id="Q9BYJ1"/>
<dbReference type="PhosphoSitePlus" id="Q9BYJ1"/>
<dbReference type="BioMuta" id="ALOXE3"/>
<dbReference type="DMDM" id="27923803"/>
<dbReference type="jPOST" id="Q9BYJ1"/>
<dbReference type="MassIVE" id="Q9BYJ1"/>
<dbReference type="PaxDb" id="9606-ENSP00000314879"/>
<dbReference type="PeptideAtlas" id="Q9BYJ1"/>
<dbReference type="ProteomicsDB" id="79655">
    <molecule id="Q9BYJ1-1"/>
</dbReference>
<dbReference type="ProteomicsDB" id="79656">
    <molecule id="Q9BYJ1-2"/>
</dbReference>
<dbReference type="Pumba" id="Q9BYJ1"/>
<dbReference type="Antibodypedia" id="24534">
    <property type="antibodies" value="156 antibodies from 21 providers"/>
</dbReference>
<dbReference type="DNASU" id="59344"/>
<dbReference type="Ensembl" id="ENST00000318227.4">
    <molecule id="Q9BYJ1-1"/>
    <property type="protein sequence ID" value="ENSP00000314879.4"/>
    <property type="gene ID" value="ENSG00000179148.11"/>
</dbReference>
<dbReference type="Ensembl" id="ENST00000380149.6">
    <molecule id="Q9BYJ1-1"/>
    <property type="protein sequence ID" value="ENSP00000369494.2"/>
    <property type="gene ID" value="ENSG00000179148.11"/>
</dbReference>
<dbReference type="Ensembl" id="ENST00000448843.7">
    <molecule id="Q9BYJ1-1"/>
    <property type="protein sequence ID" value="ENSP00000400581.2"/>
    <property type="gene ID" value="ENSG00000179148.11"/>
</dbReference>
<dbReference type="GeneID" id="59344"/>
<dbReference type="KEGG" id="hsa:59344"/>
<dbReference type="MANE-Select" id="ENST00000448843.7">
    <property type="protein sequence ID" value="ENSP00000400581.2"/>
    <property type="RefSeq nucleotide sequence ID" value="NM_021628.3"/>
    <property type="RefSeq protein sequence ID" value="NP_067641.2"/>
</dbReference>
<dbReference type="UCSC" id="uc010cnr.4">
    <molecule id="Q9BYJ1-1"/>
    <property type="organism name" value="human"/>
</dbReference>
<dbReference type="AGR" id="HGNC:13743"/>
<dbReference type="CTD" id="59344"/>
<dbReference type="DisGeNET" id="59344"/>
<dbReference type="GeneCards" id="ALOXE3"/>
<dbReference type="GeneReviews" id="ALOXE3"/>
<dbReference type="HGNC" id="HGNC:13743">
    <property type="gene designation" value="ALOXE3"/>
</dbReference>
<dbReference type="HPA" id="ENSG00000179148">
    <property type="expression patterns" value="Tissue enriched (skin)"/>
</dbReference>
<dbReference type="MalaCards" id="ALOXE3"/>
<dbReference type="MIM" id="606545">
    <property type="type" value="phenotype"/>
</dbReference>
<dbReference type="MIM" id="607206">
    <property type="type" value="gene"/>
</dbReference>
<dbReference type="neXtProt" id="NX_Q9BYJ1"/>
<dbReference type="OpenTargets" id="ENSG00000179148"/>
<dbReference type="Orphanet" id="79394">
    <property type="disease" value="Congenital ichthyosiform erythroderma"/>
</dbReference>
<dbReference type="Orphanet" id="313">
    <property type="disease" value="Lamellar ichthyosis"/>
</dbReference>
<dbReference type="Orphanet" id="281122">
    <property type="disease" value="Self-improving collodion baby"/>
</dbReference>
<dbReference type="PharmGKB" id="PA24727"/>
<dbReference type="VEuPathDB" id="HostDB:ENSG00000179148"/>
<dbReference type="eggNOG" id="ENOG502QQSP">
    <property type="taxonomic scope" value="Eukaryota"/>
</dbReference>
<dbReference type="GeneTree" id="ENSGT00940000156796"/>
<dbReference type="HOGENOM" id="CLU_004282_3_3_1"/>
<dbReference type="InParanoid" id="Q9BYJ1"/>
<dbReference type="OMA" id="DSPGNRY"/>
<dbReference type="OrthoDB" id="407298at2759"/>
<dbReference type="PAN-GO" id="Q9BYJ1">
    <property type="GO annotations" value="5 GO annotations based on evolutionary models"/>
</dbReference>
<dbReference type="PhylomeDB" id="Q9BYJ1"/>
<dbReference type="TreeFam" id="TF105320"/>
<dbReference type="BioCyc" id="MetaCyc:ENSG00000179148-MONOMER"/>
<dbReference type="BRENDA" id="4.2.1.152">
    <property type="organism ID" value="2681"/>
</dbReference>
<dbReference type="PathwayCommons" id="Q9BYJ1"/>
<dbReference type="Reactome" id="R-HSA-2142712">
    <property type="pathway name" value="Synthesis of 12-eicosatetraenoic acid derivatives"/>
</dbReference>
<dbReference type="SignaLink" id="Q9BYJ1"/>
<dbReference type="UniPathway" id="UPA00222"/>
<dbReference type="UniPathway" id="UPA00881"/>
<dbReference type="BioGRID-ORCS" id="59344">
    <property type="hits" value="5 hits in 1142 CRISPR screens"/>
</dbReference>
<dbReference type="ChiTaRS" id="ALOXE3">
    <property type="organism name" value="human"/>
</dbReference>
<dbReference type="GeneWiki" id="ALOXE3"/>
<dbReference type="GenomeRNAi" id="59344"/>
<dbReference type="Pharos" id="Q9BYJ1">
    <property type="development level" value="Tbio"/>
</dbReference>
<dbReference type="PRO" id="PR:Q9BYJ1"/>
<dbReference type="Proteomes" id="UP000005640">
    <property type="component" value="Chromosome 17"/>
</dbReference>
<dbReference type="RNAct" id="Q9BYJ1">
    <property type="molecule type" value="protein"/>
</dbReference>
<dbReference type="Bgee" id="ENSG00000179148">
    <property type="expression patterns" value="Expressed in skin of leg and 107 other cell types or tissues"/>
</dbReference>
<dbReference type="ExpressionAtlas" id="Q9BYJ1">
    <property type="expression patterns" value="baseline and differential"/>
</dbReference>
<dbReference type="GO" id="GO:0005829">
    <property type="term" value="C:cytosol"/>
    <property type="evidence" value="ECO:0000304"/>
    <property type="project" value="Reactome"/>
</dbReference>
<dbReference type="GO" id="GO:0016020">
    <property type="term" value="C:membrane"/>
    <property type="evidence" value="ECO:0007669"/>
    <property type="project" value="GOC"/>
</dbReference>
<dbReference type="GO" id="GO:0106256">
    <property type="term" value="F:hydroperoxy icosatetraenoate dehydratase activity"/>
    <property type="evidence" value="ECO:0007669"/>
    <property type="project" value="UniProtKB-EC"/>
</dbReference>
<dbReference type="GO" id="GO:0106255">
    <property type="term" value="F:hydroperoxy icosatetraenoate isomerase activity"/>
    <property type="evidence" value="ECO:0000314"/>
    <property type="project" value="UniProtKB"/>
</dbReference>
<dbReference type="GO" id="GO:0050486">
    <property type="term" value="F:intramolecular hydroxytransferase activity"/>
    <property type="evidence" value="ECO:0000314"/>
    <property type="project" value="UniProtKB"/>
</dbReference>
<dbReference type="GO" id="GO:0005506">
    <property type="term" value="F:iron ion binding"/>
    <property type="evidence" value="ECO:0007669"/>
    <property type="project" value="InterPro"/>
</dbReference>
<dbReference type="GO" id="GO:0016702">
    <property type="term" value="F:oxidoreductase activity, acting on single donors with incorporation of molecular oxygen, incorporation of two atoms of oxygen"/>
    <property type="evidence" value="ECO:0000314"/>
    <property type="project" value="UniProtKB"/>
</dbReference>
<dbReference type="GO" id="GO:0019369">
    <property type="term" value="P:arachidonate metabolic process"/>
    <property type="evidence" value="ECO:0000314"/>
    <property type="project" value="UniProtKB"/>
</dbReference>
<dbReference type="GO" id="GO:0046513">
    <property type="term" value="P:ceramide biosynthetic process"/>
    <property type="evidence" value="ECO:0000250"/>
    <property type="project" value="UniProtKB"/>
</dbReference>
<dbReference type="GO" id="GO:0061436">
    <property type="term" value="P:establishment of skin barrier"/>
    <property type="evidence" value="ECO:0000250"/>
    <property type="project" value="UniProtKB"/>
</dbReference>
<dbReference type="GO" id="GO:0045444">
    <property type="term" value="P:fat cell differentiation"/>
    <property type="evidence" value="ECO:0000250"/>
    <property type="project" value="UniProtKB"/>
</dbReference>
<dbReference type="GO" id="GO:0051122">
    <property type="term" value="P:hepoxilin biosynthetic process"/>
    <property type="evidence" value="ECO:0000314"/>
    <property type="project" value="UniProtKB"/>
</dbReference>
<dbReference type="GO" id="GO:0043651">
    <property type="term" value="P:linoleic acid metabolic process"/>
    <property type="evidence" value="ECO:0000314"/>
    <property type="project" value="UniProtKB"/>
</dbReference>
<dbReference type="GO" id="GO:0034440">
    <property type="term" value="P:lipid oxidation"/>
    <property type="evidence" value="ECO:0007669"/>
    <property type="project" value="InterPro"/>
</dbReference>
<dbReference type="GO" id="GO:0019372">
    <property type="term" value="P:lipoxygenase pathway"/>
    <property type="evidence" value="ECO:0000314"/>
    <property type="project" value="UniProtKB"/>
</dbReference>
<dbReference type="GO" id="GO:0035357">
    <property type="term" value="P:peroxisome proliferator activated receptor signaling pathway"/>
    <property type="evidence" value="ECO:0000250"/>
    <property type="project" value="UniProtKB"/>
</dbReference>
<dbReference type="GO" id="GO:0019233">
    <property type="term" value="P:sensory perception of pain"/>
    <property type="evidence" value="ECO:0000250"/>
    <property type="project" value="UniProtKB"/>
</dbReference>
<dbReference type="GO" id="GO:0006665">
    <property type="term" value="P:sphingolipid metabolic process"/>
    <property type="evidence" value="ECO:0000314"/>
    <property type="project" value="UniProtKB"/>
</dbReference>
<dbReference type="CDD" id="cd01753">
    <property type="entry name" value="PLAT_LOX"/>
    <property type="match status" value="1"/>
</dbReference>
<dbReference type="FunFam" id="3.10.450.60:FF:000001">
    <property type="entry name" value="arachidonate 12-lipoxygenase, 12R-type"/>
    <property type="match status" value="1"/>
</dbReference>
<dbReference type="FunFam" id="1.20.245.10:FF:000001">
    <property type="entry name" value="Arachidonate 5-lipoxygenase a"/>
    <property type="match status" value="1"/>
</dbReference>
<dbReference type="FunFam" id="2.60.60.20:FF:000002">
    <property type="entry name" value="Arachidonate 5-lipoxygenase a"/>
    <property type="match status" value="1"/>
</dbReference>
<dbReference type="FunFam" id="1.20.245.10:FF:000003">
    <property type="entry name" value="Arachidonate lipoxygenase 3"/>
    <property type="match status" value="1"/>
</dbReference>
<dbReference type="Gene3D" id="3.10.450.60">
    <property type="match status" value="1"/>
</dbReference>
<dbReference type="Gene3D" id="1.20.245.10">
    <property type="entry name" value="Lipoxygenase-1, Domain 5"/>
    <property type="match status" value="2"/>
</dbReference>
<dbReference type="Gene3D" id="2.60.60.20">
    <property type="entry name" value="PLAT/LH2 domain"/>
    <property type="match status" value="1"/>
</dbReference>
<dbReference type="InterPro" id="IPR000907">
    <property type="entry name" value="LipOase"/>
</dbReference>
<dbReference type="InterPro" id="IPR013819">
    <property type="entry name" value="LipOase_C"/>
</dbReference>
<dbReference type="InterPro" id="IPR036226">
    <property type="entry name" value="LipOase_C_sf"/>
</dbReference>
<dbReference type="InterPro" id="IPR020834">
    <property type="entry name" value="LipOase_CS"/>
</dbReference>
<dbReference type="InterPro" id="IPR020833">
    <property type="entry name" value="LipOase_Fe_BS"/>
</dbReference>
<dbReference type="InterPro" id="IPR001885">
    <property type="entry name" value="LipOase_mml"/>
</dbReference>
<dbReference type="InterPro" id="IPR001024">
    <property type="entry name" value="PLAT/LH2_dom"/>
</dbReference>
<dbReference type="InterPro" id="IPR036392">
    <property type="entry name" value="PLAT/LH2_dom_sf"/>
</dbReference>
<dbReference type="InterPro" id="IPR042062">
    <property type="entry name" value="PLAT_LOX_verte"/>
</dbReference>
<dbReference type="PANTHER" id="PTHR11771">
    <property type="entry name" value="LIPOXYGENASE"/>
    <property type="match status" value="1"/>
</dbReference>
<dbReference type="Pfam" id="PF00305">
    <property type="entry name" value="Lipoxygenase"/>
    <property type="match status" value="1"/>
</dbReference>
<dbReference type="Pfam" id="PF01477">
    <property type="entry name" value="PLAT"/>
    <property type="match status" value="1"/>
</dbReference>
<dbReference type="PRINTS" id="PR00087">
    <property type="entry name" value="LIPOXYGENASE"/>
</dbReference>
<dbReference type="PRINTS" id="PR00467">
    <property type="entry name" value="MAMLPOXGNASE"/>
</dbReference>
<dbReference type="SMART" id="SM00308">
    <property type="entry name" value="LH2"/>
    <property type="match status" value="1"/>
</dbReference>
<dbReference type="SUPFAM" id="SSF49723">
    <property type="entry name" value="Lipase/lipooxygenase domain (PLAT/LH2 domain)"/>
    <property type="match status" value="1"/>
</dbReference>
<dbReference type="SUPFAM" id="SSF48484">
    <property type="entry name" value="Lipoxigenase"/>
    <property type="match status" value="1"/>
</dbReference>
<dbReference type="PROSITE" id="PS00711">
    <property type="entry name" value="LIPOXYGENASE_1"/>
    <property type="match status" value="1"/>
</dbReference>
<dbReference type="PROSITE" id="PS00081">
    <property type="entry name" value="LIPOXYGENASE_2"/>
    <property type="match status" value="1"/>
</dbReference>
<dbReference type="PROSITE" id="PS51393">
    <property type="entry name" value="LIPOXYGENASE_3"/>
    <property type="match status" value="1"/>
</dbReference>
<dbReference type="PROSITE" id="PS50095">
    <property type="entry name" value="PLAT"/>
    <property type="match status" value="1"/>
</dbReference>
<name>LOXE3_HUMAN</name>
<feature type="chain" id="PRO_0000220691" description="Hydroperoxide isomerase ALOXE3">
    <location>
        <begin position="1"/>
        <end position="711"/>
    </location>
</feature>
<feature type="domain" description="PLAT" evidence="3">
    <location>
        <begin position="2"/>
        <end position="119"/>
    </location>
</feature>
<feature type="domain" description="Lipoxygenase" evidence="4">
    <location>
        <begin position="120"/>
        <end position="711"/>
    </location>
</feature>
<feature type="binding site" evidence="4">
    <location>
        <position position="408"/>
    </location>
    <ligand>
        <name>Fe cation</name>
        <dbReference type="ChEBI" id="CHEBI:24875"/>
        <note>catalytic</note>
    </ligand>
</feature>
<feature type="binding site" evidence="4">
    <location>
        <position position="413"/>
    </location>
    <ligand>
        <name>Fe cation</name>
        <dbReference type="ChEBI" id="CHEBI:24875"/>
        <note>catalytic</note>
    </ligand>
</feature>
<feature type="binding site" evidence="4">
    <location>
        <position position="588"/>
    </location>
    <ligand>
        <name>Fe cation</name>
        <dbReference type="ChEBI" id="CHEBI:24875"/>
        <note>catalytic</note>
    </ligand>
</feature>
<feature type="binding site" evidence="4">
    <location>
        <position position="592"/>
    </location>
    <ligand>
        <name>Fe cation</name>
        <dbReference type="ChEBI" id="CHEBI:24875"/>
        <note>catalytic</note>
    </ligand>
</feature>
<feature type="binding site" evidence="4">
    <location>
        <position position="711"/>
    </location>
    <ligand>
        <name>Fe cation</name>
        <dbReference type="ChEBI" id="CHEBI:24875"/>
        <note>catalytic</note>
    </ligand>
</feature>
<feature type="splice variant" id="VSP_043287" description="In isoform 2." evidence="15">
    <original>M</original>
    <variation>MPRGAFRPCLPALYFAFLTCPTPEQRMSGTQAPDIHLGEPARGTGCVRGKQTSIRVQDCGRREEARAASRELRREKAQEHPRESWAHPQPYPAPQPLALRPETQPCPACRSSPPGRLLLRPALPGHPFLLPIM</variation>
    <location>
        <position position="1"/>
    </location>
</feature>
<feature type="sequence variant" id="VAR_069561" description="In ARCI3; no effect on enzyme activity; dbSNP:rs121434235." evidence="8 10">
    <original>L</original>
    <variation>M</variation>
    <location>
        <position position="237"/>
    </location>
</feature>
<feature type="sequence variant" id="VAR_069562" description="In ARCI3; complete loss of the enzyme activity; dbSNP:rs786205120." evidence="8">
    <original>G</original>
    <variation>V</variation>
    <location>
        <position position="281"/>
    </location>
</feature>
<feature type="sequence variant" id="VAR_069563" description="In ARCI3; complete loss of the enzyme activity." evidence="10">
    <original>QYVA</original>
    <variation>P</variation>
    <location>
        <begin position="344"/>
        <end position="347"/>
    </location>
</feature>
<feature type="sequence variant" id="VAR_015175" description="In ARCI3; complete loss of the enzyme activity; dbSNP:rs121434234." evidence="5 7">
    <original>R</original>
    <variation>S</variation>
    <location>
        <position position="396"/>
    </location>
</feature>
<feature type="sequence variant" id="VAR_069564" description="In ARCI3; dbSNP:rs1355284797." evidence="11">
    <original>L</original>
    <variation>P</variation>
    <location>
        <position position="427"/>
    </location>
</feature>
<feature type="sequence variant" id="VAR_015176" description="In ARCI3; complete loss of the enzyme activity; dbSNP:rs121434232." evidence="5 7">
    <original>V</original>
    <variation>F</variation>
    <location>
        <position position="500"/>
    </location>
</feature>
<feature type="sequence variant" id="VAR_069565" description="In ARCI3; complete loss of the enzyme activity; dbSNP:rs147149459." evidence="8 10 11">
    <original>P</original>
    <variation>L</variation>
    <location>
        <position position="630"/>
    </location>
</feature>
<feature type="mutagenesis site" description="Increases the O2-dependent dioxygenase activity." evidence="12 13">
    <original>A</original>
    <variation>G</variation>
    <location>
        <position position="451"/>
    </location>
</feature>
<feature type="sequence conflict" description="In Ref. 1; CAC12843." evidence="16" ref="1">
    <original>C</original>
    <variation>R</variation>
    <location>
        <position position="155"/>
    </location>
</feature>
<feature type="sequence conflict" description="In Ref. 2; AAG16899." evidence="16" ref="2">
    <original>F</original>
    <variation>L</variation>
    <location>
        <position position="194"/>
    </location>
</feature>
<reference key="1">
    <citation type="journal article" date="2001" name="Genomics">
        <title>A gene cluster encoding human epidermis-type lipoxygenases at chromosome 17p13.1: cloning, physical mapping, and expression.</title>
        <authorList>
            <person name="Krieg P."/>
            <person name="Marks F."/>
            <person name="Fuerstenberger G."/>
        </authorList>
    </citation>
    <scope>NUCLEOTIDE SEQUENCE [GENOMIC DNA / MRNA] (ISOFORM 1)</scope>
</reference>
<reference key="2">
    <citation type="journal article" date="2003" name="Proc. Natl. Acad. Sci. U.S.A.">
        <title>The lipoxygenase gene ALOXE3 implicated in skin differentiation encodes a hydroperoxide isomerase.</title>
        <authorList>
            <person name="Yu Z."/>
            <person name="Schneider C."/>
            <person name="Boeglin W.E."/>
            <person name="Marnett L.J."/>
            <person name="Brash A.R."/>
        </authorList>
    </citation>
    <scope>NUCLEOTIDE SEQUENCE [MRNA] (ISOFORM 1)</scope>
    <scope>FUNCTION IN HEPOXILIN A3 SYNTHESIS</scope>
    <scope>CATALYTIC ACTIVITY</scope>
    <scope>PATHWAY</scope>
    <scope>REACTION MECHANISM</scope>
    <scope>KINETIC PARAMETERS</scope>
</reference>
<reference key="3">
    <citation type="journal article" date="2004" name="Nat. Genet.">
        <title>Complete sequencing and characterization of 21,243 full-length human cDNAs.</title>
        <authorList>
            <person name="Ota T."/>
            <person name="Suzuki Y."/>
            <person name="Nishikawa T."/>
            <person name="Otsuki T."/>
            <person name="Sugiyama T."/>
            <person name="Irie R."/>
            <person name="Wakamatsu A."/>
            <person name="Hayashi K."/>
            <person name="Sato H."/>
            <person name="Nagai K."/>
            <person name="Kimura K."/>
            <person name="Makita H."/>
            <person name="Sekine M."/>
            <person name="Obayashi M."/>
            <person name="Nishi T."/>
            <person name="Shibahara T."/>
            <person name="Tanaka T."/>
            <person name="Ishii S."/>
            <person name="Yamamoto J."/>
            <person name="Saito K."/>
            <person name="Kawai Y."/>
            <person name="Isono Y."/>
            <person name="Nakamura Y."/>
            <person name="Nagahari K."/>
            <person name="Murakami K."/>
            <person name="Yasuda T."/>
            <person name="Iwayanagi T."/>
            <person name="Wagatsuma M."/>
            <person name="Shiratori A."/>
            <person name="Sudo H."/>
            <person name="Hosoiri T."/>
            <person name="Kaku Y."/>
            <person name="Kodaira H."/>
            <person name="Kondo H."/>
            <person name="Sugawara M."/>
            <person name="Takahashi M."/>
            <person name="Kanda K."/>
            <person name="Yokoi T."/>
            <person name="Furuya T."/>
            <person name="Kikkawa E."/>
            <person name="Omura Y."/>
            <person name="Abe K."/>
            <person name="Kamihara K."/>
            <person name="Katsuta N."/>
            <person name="Sato K."/>
            <person name="Tanikawa M."/>
            <person name="Yamazaki M."/>
            <person name="Ninomiya K."/>
            <person name="Ishibashi T."/>
            <person name="Yamashita H."/>
            <person name="Murakawa K."/>
            <person name="Fujimori K."/>
            <person name="Tanai H."/>
            <person name="Kimata M."/>
            <person name="Watanabe M."/>
            <person name="Hiraoka S."/>
            <person name="Chiba Y."/>
            <person name="Ishida S."/>
            <person name="Ono Y."/>
            <person name="Takiguchi S."/>
            <person name="Watanabe S."/>
            <person name="Yosida M."/>
            <person name="Hotuta T."/>
            <person name="Kusano J."/>
            <person name="Kanehori K."/>
            <person name="Takahashi-Fujii A."/>
            <person name="Hara H."/>
            <person name="Tanase T.-O."/>
            <person name="Nomura Y."/>
            <person name="Togiya S."/>
            <person name="Komai F."/>
            <person name="Hara R."/>
            <person name="Takeuchi K."/>
            <person name="Arita M."/>
            <person name="Imose N."/>
            <person name="Musashino K."/>
            <person name="Yuuki H."/>
            <person name="Oshima A."/>
            <person name="Sasaki N."/>
            <person name="Aotsuka S."/>
            <person name="Yoshikawa Y."/>
            <person name="Matsunawa H."/>
            <person name="Ichihara T."/>
            <person name="Shiohata N."/>
            <person name="Sano S."/>
            <person name="Moriya S."/>
            <person name="Momiyama H."/>
            <person name="Satoh N."/>
            <person name="Takami S."/>
            <person name="Terashima Y."/>
            <person name="Suzuki O."/>
            <person name="Nakagawa S."/>
            <person name="Senoh A."/>
            <person name="Mizoguchi H."/>
            <person name="Goto Y."/>
            <person name="Shimizu F."/>
            <person name="Wakebe H."/>
            <person name="Hishigaki H."/>
            <person name="Watanabe T."/>
            <person name="Sugiyama A."/>
            <person name="Takemoto M."/>
            <person name="Kawakami B."/>
            <person name="Yamazaki M."/>
            <person name="Watanabe K."/>
            <person name="Kumagai A."/>
            <person name="Itakura S."/>
            <person name="Fukuzumi Y."/>
            <person name="Fujimori Y."/>
            <person name="Komiyama M."/>
            <person name="Tashiro H."/>
            <person name="Tanigami A."/>
            <person name="Fujiwara T."/>
            <person name="Ono T."/>
            <person name="Yamada K."/>
            <person name="Fujii Y."/>
            <person name="Ozaki K."/>
            <person name="Hirao M."/>
            <person name="Ohmori Y."/>
            <person name="Kawabata A."/>
            <person name="Hikiji T."/>
            <person name="Kobatake N."/>
            <person name="Inagaki H."/>
            <person name="Ikema Y."/>
            <person name="Okamoto S."/>
            <person name="Okitani R."/>
            <person name="Kawakami T."/>
            <person name="Noguchi S."/>
            <person name="Itoh T."/>
            <person name="Shigeta K."/>
            <person name="Senba T."/>
            <person name="Matsumura K."/>
            <person name="Nakajima Y."/>
            <person name="Mizuno T."/>
            <person name="Morinaga M."/>
            <person name="Sasaki M."/>
            <person name="Togashi T."/>
            <person name="Oyama M."/>
            <person name="Hata H."/>
            <person name="Watanabe M."/>
            <person name="Komatsu T."/>
            <person name="Mizushima-Sugano J."/>
            <person name="Satoh T."/>
            <person name="Shirai Y."/>
            <person name="Takahashi Y."/>
            <person name="Nakagawa K."/>
            <person name="Okumura K."/>
            <person name="Nagase T."/>
            <person name="Nomura N."/>
            <person name="Kikuchi H."/>
            <person name="Masuho Y."/>
            <person name="Yamashita R."/>
            <person name="Nakai K."/>
            <person name="Yada T."/>
            <person name="Nakamura Y."/>
            <person name="Ohara O."/>
            <person name="Isogai T."/>
            <person name="Sugano S."/>
        </authorList>
    </citation>
    <scope>NUCLEOTIDE SEQUENCE [LARGE SCALE MRNA] (ISOFORMS 1 AND 2)</scope>
    <source>
        <tissue>Thalamus</tissue>
    </source>
</reference>
<reference key="4">
    <citation type="submission" date="2005-09" db="EMBL/GenBank/DDBJ databases">
        <authorList>
            <person name="Mural R.J."/>
            <person name="Istrail S."/>
            <person name="Sutton G."/>
            <person name="Florea L."/>
            <person name="Halpern A.L."/>
            <person name="Mobarry C.M."/>
            <person name="Lippert R."/>
            <person name="Walenz B."/>
            <person name="Shatkay H."/>
            <person name="Dew I."/>
            <person name="Miller J.R."/>
            <person name="Flanigan M.J."/>
            <person name="Edwards N.J."/>
            <person name="Bolanos R."/>
            <person name="Fasulo D."/>
            <person name="Halldorsson B.V."/>
            <person name="Hannenhalli S."/>
            <person name="Turner R."/>
            <person name="Yooseph S."/>
            <person name="Lu F."/>
            <person name="Nusskern D.R."/>
            <person name="Shue B.C."/>
            <person name="Zheng X.H."/>
            <person name="Zhong F."/>
            <person name="Delcher A.L."/>
            <person name="Huson D.H."/>
            <person name="Kravitz S.A."/>
            <person name="Mouchard L."/>
            <person name="Reinert K."/>
            <person name="Remington K.A."/>
            <person name="Clark A.G."/>
            <person name="Waterman M.S."/>
            <person name="Eichler E.E."/>
            <person name="Adams M.D."/>
            <person name="Hunkapiller M.W."/>
            <person name="Myers E.W."/>
            <person name="Venter J.C."/>
        </authorList>
    </citation>
    <scope>NUCLEOTIDE SEQUENCE [LARGE SCALE GENOMIC DNA]</scope>
</reference>
<reference key="5">
    <citation type="journal article" date="2004" name="Genome Res.">
        <title>The status, quality, and expansion of the NIH full-length cDNA project: the Mammalian Gene Collection (MGC).</title>
        <authorList>
            <consortium name="The MGC Project Team"/>
        </authorList>
    </citation>
    <scope>NUCLEOTIDE SEQUENCE [LARGE SCALE MRNA] (ISOFORM 1)</scope>
</reference>
<reference key="6">
    <citation type="journal article" date="2006" name="Arch. Biochem. Biophys.">
        <title>Human and mouse eLOX3 have distinct substrate specificities: implications for their linkage with lipoxygenases in skin.</title>
        <authorList>
            <person name="Yu Z."/>
            <person name="Schneider C."/>
            <person name="Boeglin W.E."/>
            <person name="Brash A.R."/>
        </authorList>
    </citation>
    <scope>FUNCTION AS A HYDROPEROXIDE ISOMERASE</scope>
    <scope>CATALYTIC ACTIVITY</scope>
    <scope>KINETIC PARAMETERS</scope>
    <scope>PATHWAY</scope>
</reference>
<reference key="7">
    <citation type="journal article" date="2010" name="J. Biol. Chem.">
        <title>Dioxygenase activity of epidermal lipoxygenase-3 unveiled: typical and atypical features of its catalytic activity with natural and synthetic polyunsaturated fatty acids.</title>
        <authorList>
            <person name="Zheng Y."/>
            <person name="Brash A.R."/>
        </authorList>
    </citation>
    <scope>FUNCTION AS A DIOXYGENASE</scope>
    <scope>CATALYTIC ACTIVITY</scope>
    <scope>BIOPHYSICOCHEMICAL PROPERTIES</scope>
    <scope>MUTAGENESIS OF ALA-451</scope>
    <scope>ACTIVITY REGULATION</scope>
</reference>
<reference key="8">
    <citation type="journal article" date="2010" name="J. Biol. Chem.">
        <title>On the role of molecular oxygen in lipoxygenase activation: comparison and contrast of epidermal lipoxygenase-3 with soybean lipoxygenase-1.</title>
        <authorList>
            <person name="Zheng Y."/>
            <person name="Brash A.R."/>
        </authorList>
    </citation>
    <scope>FUNCTION AS A DIOXYGENASE</scope>
    <scope>CATALYTIC ACTIVITY</scope>
    <scope>MUTAGENESIS OF ALA-451</scope>
    <scope>ACTIVITY REGULATION</scope>
</reference>
<reference key="9">
    <citation type="journal article" date="2011" name="J. Biol. Chem.">
        <title>Lipoxygenases mediate the effect of essential fatty acid in skin barrier formation: a proposed role in releasing omega-hydroxyceramide for construction of the corneocyte lipid envelope.</title>
        <authorList>
            <person name="Zheng Y."/>
            <person name="Yin H."/>
            <person name="Boeglin W.E."/>
            <person name="Elias P.M."/>
            <person name="Crumrine D."/>
            <person name="Beier D.R."/>
            <person name="Brash A.R."/>
        </authorList>
    </citation>
    <scope>FUNCTION IN CERAMIDE METABOLISM</scope>
    <scope>CATALYTIC ACTIVITY</scope>
</reference>
<reference key="10">
    <citation type="journal article" date="2002" name="Hum. Mol. Genet.">
        <title>Lipoxygenase-3 (ALOXE3) and 12(R)-lipoxygenase (ALOX12B) are mutated in non-bullous congenital ichthyosiform erythroderma (NCIE) linked to chromosome 17p13.1.</title>
        <authorList>
            <person name="Jobard F."/>
            <person name="Lefevre C."/>
            <person name="Karaduman A."/>
            <person name="Blanchet-Bardon C."/>
            <person name="Emre S."/>
            <person name="Weissenbach J."/>
            <person name="Ozguc M."/>
            <person name="Lathrop M."/>
            <person name="Prud'homme J.-F."/>
            <person name="Fischer J."/>
        </authorList>
    </citation>
    <scope>VARIANTS ARCI3 SER-396 AND PHE-500</scope>
</reference>
<reference key="11">
    <citation type="journal article" date="2005" name="Biochim. Biophys. Acta">
        <title>Mutations associated with a congenital form of ichthyosis (NCIE) inactivate the epidermal lipoxygenases 12R-LOX and eLOX3.</title>
        <authorList>
            <person name="Yu Z."/>
            <person name="Schneider C."/>
            <person name="Boeglin W.E."/>
            <person name="Brash A.R."/>
        </authorList>
    </citation>
    <scope>CHARACTERIZATION OF VARIANTS ARCI3 SER-396 AND PHE-500</scope>
</reference>
<reference key="12">
    <citation type="journal article" date="2005" name="Hum. Mutat.">
        <title>Mutation spectrum and functional analysis of epidermis-type lipoxygenases in patients with autosomal recessive congenital ichthyosis.</title>
        <authorList>
            <person name="Eckl K.M."/>
            <person name="Krieg P."/>
            <person name="Kuester W."/>
            <person name="Traupe H."/>
            <person name="Andre F."/>
            <person name="Wittstruck N."/>
            <person name="Fuerstenberger G."/>
            <person name="Hennies H.C."/>
        </authorList>
    </citation>
    <scope>VARIANTS ARCI3 MET-237; VAL-281 AND LEU-630</scope>
    <scope>CHARACTERIZATION OF VARIANTS ARCI3 MET-237; VAL-281 AND LEU-630</scope>
</reference>
<reference key="13">
    <citation type="journal article" date="2009" name="J. Invest. Dermatol.">
        <title>Molecular analysis of 250 patients with autosomal recessive congenital ichthyosis: evidence for mutation hotspots in ALOXE3 and allelic heterogeneity in ALOX12B.</title>
        <authorList>
            <person name="Eckl K.M."/>
            <person name="de Juanes S."/>
            <person name="Kurtenbach J."/>
            <person name="Naetebus M."/>
            <person name="Lugassy J."/>
            <person name="Oji V."/>
            <person name="Traupe H."/>
            <person name="Preil M.L."/>
            <person name="Martinez F."/>
            <person name="Smolle J."/>
            <person name="Harel A."/>
            <person name="Krieg P."/>
            <person name="Sprecher E."/>
            <person name="Hennies H.C."/>
        </authorList>
    </citation>
    <scope>VARIANTS ARCI3 MET-237; 344-GLN--ALA-347 DELINS PRO AND LEU-630</scope>
    <scope>CHARACTERIZATION OF VARIANT 344-GLN--ALA-347 DELINS PRO</scope>
</reference>
<reference key="14">
    <citation type="journal article" date="2010" name="J. Invest. Dermatol.">
        <title>Genotypic and clinical spectrum of self-improving collodion ichthyosis: ALOX12B, ALOXE3, and TGM1 mutations in Scandinavian patients.</title>
        <authorList>
            <person name="Vahlquist A."/>
            <person name="Bygum A."/>
            <person name="Gaanemo A."/>
            <person name="Virtanen M."/>
            <person name="Hellstroem-Pigg M."/>
            <person name="Strauss G."/>
            <person name="Brandrup F."/>
            <person name="Fischer J."/>
        </authorList>
    </citation>
    <scope>VARIANTS ARCI3 PRO-427 AND LEU-630</scope>
</reference>
<gene>
    <name evidence="21" type="primary">ALOXE3</name>
</gene>
<accession>Q9BYJ1</accession>
<accession>B2R981</accession>
<accession>B7Z3W0</accession>
<accession>Q3ZB74</accession>
<accession>Q9H4F2</accession>
<accession>Q9HC22</accession>
<protein>
    <recommendedName>
        <fullName evidence="16">Hydroperoxide isomerase ALOXE3</fullName>
    </recommendedName>
    <alternativeName>
        <fullName evidence="2">Epidermis-type lipoxygenase 3</fullName>
        <shortName>Epidermal LOX-3</shortName>
        <shortName evidence="2">e-LOX-3</shortName>
        <shortName>eLOX-3</shortName>
    </alternativeName>
    <alternativeName>
        <fullName evidence="16">Hydroperoxy dehydratase ALOXE3</fullName>
    </alternativeName>
    <alternativeName>
        <fullName>Hydroperoxy icosatetraenoate dehydratase</fullName>
        <ecNumber evidence="6 14">4.2.1.152</ecNumber>
    </alternativeName>
    <alternativeName>
        <fullName>Hydroperoxy icosatetraenoate isomerase</fullName>
        <ecNumber evidence="6 9 14">5.4.4.7</ecNumber>
    </alternativeName>
</protein>
<evidence type="ECO:0000250" key="1">
    <source>
        <dbReference type="UniProtKB" id="D3ZKX9"/>
    </source>
</evidence>
<evidence type="ECO:0000250" key="2">
    <source>
        <dbReference type="UniProtKB" id="Q9WV07"/>
    </source>
</evidence>
<evidence type="ECO:0000255" key="3">
    <source>
        <dbReference type="PROSITE-ProRule" id="PRU00152"/>
    </source>
</evidence>
<evidence type="ECO:0000255" key="4">
    <source>
        <dbReference type="PROSITE-ProRule" id="PRU00726"/>
    </source>
</evidence>
<evidence type="ECO:0000269" key="5">
    <source>
    </source>
</evidence>
<evidence type="ECO:0000269" key="6">
    <source>
    </source>
</evidence>
<evidence type="ECO:0000269" key="7">
    <source>
    </source>
</evidence>
<evidence type="ECO:0000269" key="8">
    <source>
    </source>
</evidence>
<evidence type="ECO:0000269" key="9">
    <source>
    </source>
</evidence>
<evidence type="ECO:0000269" key="10">
    <source>
    </source>
</evidence>
<evidence type="ECO:0000269" key="11">
    <source>
    </source>
</evidence>
<evidence type="ECO:0000269" key="12">
    <source>
    </source>
</evidence>
<evidence type="ECO:0000269" key="13">
    <source>
    </source>
</evidence>
<evidence type="ECO:0000269" key="14">
    <source>
    </source>
</evidence>
<evidence type="ECO:0000303" key="15">
    <source>
    </source>
</evidence>
<evidence type="ECO:0000305" key="16"/>
<evidence type="ECO:0000305" key="17">
    <source>
    </source>
</evidence>
<evidence type="ECO:0000305" key="18">
    <source>
    </source>
</evidence>
<evidence type="ECO:0000305" key="19">
    <source>
    </source>
</evidence>
<evidence type="ECO:0000305" key="20">
    <source>
    </source>
</evidence>
<evidence type="ECO:0000312" key="21">
    <source>
        <dbReference type="HGNC" id="HGNC:13743"/>
    </source>
</evidence>
<proteinExistence type="evidence at protein level"/>
<sequence length="711" mass="80543">MAVYRLCVTTGPYLRAGTLDNISVTLVGTCGESPKQRLDRMGRDFAPGSVQKYKVRCTAELGELLLLRVHKERYAFFRKDSWYCSRICVTEPDGSVSHFPCYQWIEGYCTVELRPGTARTICQDSLPLLLDHRTRELRARQECYRWKIYAPGFPCMVDVNSFQEMESDKKFALTKTTTCVDQGDSSGNRYLPGFPMKIDIPSLMYMEPNVRYSATKTISLLFNAIPASLGMKLRGLLDRKGSWKKLDDMQNIFWCHKTFTTKYVTEHWCEDHFFGYQYLNGVNPVMLHCISSLPSKLPVTNDMVAPLLGQDTCLQTELERGNIFLADYWILAEAPTHCLNGRQQYVAAPLCLLWLSPQGALVPLAIQLSQTPGPDSPIFLPTDSEWDWLLAKTWVRNSEFLVHENNTHFLCTHLLCEAFAMATLRQLPLCHPIYKLLLPHTRYTLQVNTIARATLLNPEGLVDQVTSIGRQGLIYLMSTGLAHFTYTNFCLPDSLRARGVLAIPNYHYRDDGLKIWAAIESFVSEIVGYYYPSDASVQQDSELQAWTGEIFAQAFLGRESSGFPSRLCTPGEMVKFLTAIIFNCSAQHAAVNSGQHDFGAWMPNAPSSMRQPPPQTKGTTTLKTYLDTLPEVNISCNNLLLFWLVSQEPKDQRPLGTYPDEHFTEEAPRRSIAAFQSRLAQISRDIQERNQGLALPYTYLDPPLIENSVSI</sequence>
<organism>
    <name type="scientific">Homo sapiens</name>
    <name type="common">Human</name>
    <dbReference type="NCBI Taxonomy" id="9606"/>
    <lineage>
        <taxon>Eukaryota</taxon>
        <taxon>Metazoa</taxon>
        <taxon>Chordata</taxon>
        <taxon>Craniata</taxon>
        <taxon>Vertebrata</taxon>
        <taxon>Euteleostomi</taxon>
        <taxon>Mammalia</taxon>
        <taxon>Eutheria</taxon>
        <taxon>Euarchontoglires</taxon>
        <taxon>Primates</taxon>
        <taxon>Haplorrhini</taxon>
        <taxon>Catarrhini</taxon>
        <taxon>Hominidae</taxon>
        <taxon>Homo</taxon>
    </lineage>
</organism>
<comment type="function">
    <text evidence="1 2 6 9 12 13 14">Non-heme iron-containing lipoxygenase which is atypical in that it displays a prominent hydroperoxide isomerase activity and a reduced lipoxygenases activity (PubMed:12881489, PubMed:17045234, PubMed:20921226, PubMed:20923767). The hydroperoxide isomerase activity catalyzes the isomerization of hydroperoxides, derived from arachidonic and linoleic acid by ALOX12B, into hepoxilin-type epoxyalcohols and ketones (PubMed:12881489, PubMed:17045234, PubMed:20923767). In presence of oxygen, oxygenates polyunsaturated fatty acids, including arachidonic acid, to produce fatty acid hydroperoxides (PubMed:20921226). In the skin, acts downstream of ALOX12B on the linoleate moiety of esterified omega-hydroxyacyl-sphingosine (EOS) ceramides to produce an epoxy-ketone derivative, a crucial step in the conjugation of omega-hydroxyceramide to membrane proteins (PubMed:21558561). Therefore plays a crucial role in the synthesis of corneocytes lipid envelope and the establishment of the skin barrier to water loss (PubMed:21558561). In parallel, it may have a signaling function in barrier formation through the production of hepoxilins metabolites (PubMed:21558561). Also plays a role in adipocyte differentiation through hepoxilin A3 and hepoxilin B3 production which in turn activate PPARG (By similarity). Through the production of hepoxilins in the spinal cord, it may regulate inflammatory tactile allodynia (By similarity).</text>
</comment>
<comment type="catalytic activity">
    <reaction evidence="6 9 14">
        <text>a hydroperoxyeicosatetraenoate = a hydroxy-epoxy-eicosatetraenoate</text>
        <dbReference type="Rhea" id="RHEA:55560"/>
        <dbReference type="ChEBI" id="CHEBI:59720"/>
        <dbReference type="ChEBI" id="CHEBI:137328"/>
        <dbReference type="EC" id="5.4.4.7"/>
    </reaction>
    <physiologicalReaction direction="left-to-right" evidence="17">
        <dbReference type="Rhea" id="RHEA:55561"/>
    </physiologicalReaction>
</comment>
<comment type="catalytic activity">
    <reaction evidence="6">
        <text>(12R)-hydroperoxy-(5Z,8Z,10E,14Z)-eicosatetraenoate = (8R)-hydroxy-(11R,12R)-epoxy-(5Z,9E,14Z)-eicosatrienoate</text>
        <dbReference type="Rhea" id="RHEA:37939"/>
        <dbReference type="ChEBI" id="CHEBI:75230"/>
        <dbReference type="ChEBI" id="CHEBI:75232"/>
        <dbReference type="EC" id="5.4.4.7"/>
    </reaction>
    <physiologicalReaction direction="left-to-right" evidence="17">
        <dbReference type="Rhea" id="RHEA:37940"/>
    </physiologicalReaction>
</comment>
<comment type="catalytic activity">
    <reaction evidence="6">
        <text>(12S)-hydroperoxy-(5Z,8Z,10E,14Z)-eicosatetraenoate = (8R)-hydroxy-(11S,12S)-epoxy-(5Z,9E,14Z)-eicosatrienoate</text>
        <dbReference type="Rhea" id="RHEA:37955"/>
        <dbReference type="ChEBI" id="CHEBI:57444"/>
        <dbReference type="ChEBI" id="CHEBI:75233"/>
        <dbReference type="EC" id="5.4.4.7"/>
    </reaction>
    <physiologicalReaction direction="left-to-right" evidence="17">
        <dbReference type="Rhea" id="RHEA:37956"/>
    </physiologicalReaction>
</comment>
<comment type="catalytic activity">
    <reaction evidence="6">
        <text>(12S)-hydroperoxy-(5Z,8Z,10E,14Z)-eicosatetraenoate = (10R)-hydroxy-(11S,12S)-epoxy-(5Z,8Z,14Z)-eicosatrienoate</text>
        <dbReference type="Rhea" id="RHEA:37951"/>
        <dbReference type="ChEBI" id="CHEBI:57444"/>
        <dbReference type="ChEBI" id="CHEBI:75234"/>
        <dbReference type="EC" id="5.4.4.7"/>
    </reaction>
    <physiologicalReaction direction="left-to-right" evidence="17">
        <dbReference type="Rhea" id="RHEA:37952"/>
    </physiologicalReaction>
</comment>
<comment type="catalytic activity">
    <reaction evidence="6">
        <text>(15S)-hydroperoxy-(5Z,8Z,11Z,13E)-eicosatetraenoate = (13R)-hydroxy-(14S,15S)-epoxy-(5Z,8Z,11Z)-eicosatrienoate</text>
        <dbReference type="Rhea" id="RHEA:37959"/>
        <dbReference type="ChEBI" id="CHEBI:57446"/>
        <dbReference type="ChEBI" id="CHEBI:75235"/>
        <dbReference type="EC" id="5.4.4.7"/>
    </reaction>
    <physiologicalReaction direction="left-to-right" evidence="17">
        <dbReference type="Rhea" id="RHEA:37960"/>
    </physiologicalReaction>
</comment>
<comment type="catalytic activity">
    <reaction evidence="9">
        <text>(5S)-hydroperoxy-(6E,8Z,11Z,14Z)-eicosatetraenoate = 7R-hydroxy-5S,6S-epoxy-(8Z,11Z,14Z)-eicosatrienoate</text>
        <dbReference type="Rhea" id="RHEA:41251"/>
        <dbReference type="ChEBI" id="CHEBI:57450"/>
        <dbReference type="ChEBI" id="CHEBI:77919"/>
    </reaction>
    <physiologicalReaction direction="left-to-right" evidence="18">
        <dbReference type="Rhea" id="RHEA:41252"/>
    </physiologicalReaction>
</comment>
<comment type="catalytic activity">
    <reaction evidence="13">
        <text>(13S)-hydroperoxy-(9Z,11E)-octadecadienoate = 11-hydroxy-(12S,13S)-epoxy-(9Z)-octadecenoate</text>
        <dbReference type="Rhea" id="RHEA:50212"/>
        <dbReference type="ChEBI" id="CHEBI:57466"/>
        <dbReference type="ChEBI" id="CHEBI:132064"/>
    </reaction>
    <physiologicalReaction direction="left-to-right" evidence="19">
        <dbReference type="Rhea" id="RHEA:50213"/>
    </physiologicalReaction>
</comment>
<comment type="catalytic activity">
    <reaction evidence="14">
        <text>N-[omega-(9R)-hydroperoxy-(10E,12Z)-octadecadienoyloxy]acyl-beta-D-glucosyl-(1&lt;-&gt;1)-octadecasphing-4E-enine = a N-[omega-(9R,10R)-epoxy-(13R)-hydroxy-(11E)-octadecenoyloxy]acyl-beta-D-glucosyl-(1&lt;-&gt;1)-sphing-4E-enine</text>
        <dbReference type="Rhea" id="RHEA:40503"/>
        <dbReference type="ChEBI" id="CHEBI:134624"/>
        <dbReference type="ChEBI" id="CHEBI:134626"/>
    </reaction>
    <physiologicalReaction direction="left-to-right" evidence="20">
        <dbReference type="Rhea" id="RHEA:40504"/>
    </physiologicalReaction>
</comment>
<comment type="catalytic activity">
    <reaction evidence="14">
        <text>a N-[omega-(9R)-hydroperoxy-(10E,12Z)-octadecadienoyloxy]-acylsphin-4E-enine = a N-[omega-(9R,10R)-epoxy-(13R)-hydroxy-(11E)-octadecenoyloxy]-acylsphing-4E-enine</text>
        <dbReference type="Rhea" id="RHEA:41243"/>
        <dbReference type="ChEBI" id="CHEBI:77889"/>
        <dbReference type="ChEBI" id="CHEBI:77891"/>
    </reaction>
    <physiologicalReaction direction="left-to-right" evidence="20">
        <dbReference type="Rhea" id="RHEA:41244"/>
    </physiologicalReaction>
</comment>
<comment type="catalytic activity">
    <reaction evidence="6">
        <text>a hydroperoxyeicosatetraenoate = an oxoeicosatetraenoate + H2O</text>
        <dbReference type="Rhea" id="RHEA:55556"/>
        <dbReference type="ChEBI" id="CHEBI:15377"/>
        <dbReference type="ChEBI" id="CHEBI:59720"/>
        <dbReference type="ChEBI" id="CHEBI:131859"/>
        <dbReference type="EC" id="4.2.1.152"/>
    </reaction>
    <physiologicalReaction direction="left-to-right" evidence="17">
        <dbReference type="Rhea" id="RHEA:55557"/>
    </physiologicalReaction>
</comment>
<comment type="catalytic activity">
    <reaction evidence="6 14">
        <text>(12R)-hydroperoxy-(5Z,8Z,10E,14Z)-eicosatetraenoate = 12-oxo-(5Z,8Z,10E,14Z)-eicosatetraenoate + H2O</text>
        <dbReference type="Rhea" id="RHEA:37943"/>
        <dbReference type="ChEBI" id="CHEBI:15377"/>
        <dbReference type="ChEBI" id="CHEBI:75230"/>
        <dbReference type="ChEBI" id="CHEBI:75231"/>
        <dbReference type="EC" id="4.2.1.152"/>
    </reaction>
    <physiologicalReaction direction="left-to-right" evidence="17">
        <dbReference type="Rhea" id="RHEA:37944"/>
    </physiologicalReaction>
</comment>
<comment type="catalytic activity">
    <reaction evidence="6">
        <text>(12S)-hydroperoxy-(5Z,8Z,10E,14Z)-eicosatetraenoate = 12-oxo-(5Z,8Z,10E,14Z)-eicosatetraenoate + H2O</text>
        <dbReference type="Rhea" id="RHEA:37947"/>
        <dbReference type="ChEBI" id="CHEBI:15377"/>
        <dbReference type="ChEBI" id="CHEBI:57444"/>
        <dbReference type="ChEBI" id="CHEBI:75231"/>
        <dbReference type="EC" id="4.2.1.152"/>
    </reaction>
    <physiologicalReaction direction="left-to-right" evidence="17">
        <dbReference type="Rhea" id="RHEA:37948"/>
    </physiologicalReaction>
</comment>
<comment type="catalytic activity">
    <reaction evidence="6">
        <text>(15S)-hydroperoxy-(5Z,8Z,11Z,13E)-eicosatetraenoate = 15-oxo-(5Z,8Z,11Z,13E)-eicosatetraenoate + H2O</text>
        <dbReference type="Rhea" id="RHEA:48636"/>
        <dbReference type="ChEBI" id="CHEBI:15377"/>
        <dbReference type="ChEBI" id="CHEBI:57410"/>
        <dbReference type="ChEBI" id="CHEBI:57446"/>
    </reaction>
    <physiologicalReaction direction="left-to-right" evidence="17">
        <dbReference type="Rhea" id="RHEA:48637"/>
    </physiologicalReaction>
</comment>
<comment type="catalytic activity">
    <reaction evidence="13">
        <text>(13S)-hydroperoxy-(9Z,11E)-octadecadienoate = 13-oxo-(9Z,11E)-octadecadienoate + H2O</text>
        <dbReference type="Rhea" id="RHEA:48716"/>
        <dbReference type="ChEBI" id="CHEBI:15377"/>
        <dbReference type="ChEBI" id="CHEBI:57466"/>
        <dbReference type="ChEBI" id="CHEBI:90781"/>
    </reaction>
    <physiologicalReaction direction="left-to-right" evidence="19">
        <dbReference type="Rhea" id="RHEA:48717"/>
    </physiologicalReaction>
</comment>
<comment type="catalytic activity">
    <reaction evidence="2">
        <text>(8S)-hydroperoxy-(5Z,9E,11Z,14Z)-eicosatetraenoate = (10R)-hydroxy-(8S,9S)-epoxy-(5Z,11Z,14Z)-eicosatrienoate</text>
        <dbReference type="Rhea" id="RHEA:37931"/>
        <dbReference type="ChEBI" id="CHEBI:75322"/>
        <dbReference type="ChEBI" id="CHEBI:75327"/>
        <dbReference type="EC" id="5.4.4.7"/>
    </reaction>
    <physiologicalReaction direction="left-to-right" evidence="2">
        <dbReference type="Rhea" id="RHEA:37932"/>
    </physiologicalReaction>
</comment>
<comment type="catalytic activity">
    <reaction evidence="2">
        <text>(8R)-hydroperoxy-(5Z,9E,11Z,14Z)-eicosatetraenoate = 8-oxo-(5Z,9E,11Z,14Z)-eicosatetraenoate + H2O</text>
        <dbReference type="Rhea" id="RHEA:37935"/>
        <dbReference type="ChEBI" id="CHEBI:15377"/>
        <dbReference type="ChEBI" id="CHEBI:57447"/>
        <dbReference type="ChEBI" id="CHEBI:75326"/>
        <dbReference type="EC" id="4.2.1.152"/>
    </reaction>
    <physiologicalReaction direction="left-to-right" evidence="2">
        <dbReference type="Rhea" id="RHEA:37936"/>
    </physiologicalReaction>
</comment>
<comment type="catalytic activity">
    <reaction evidence="2">
        <text>(8S)-hydroperoxy-(5Z,9E,11Z,14Z)-eicosatetraenoate = 8-oxo-(5Z,9E,11Z,14Z)-eicosatetraenoate + H2O</text>
        <dbReference type="Rhea" id="RHEA:37927"/>
        <dbReference type="ChEBI" id="CHEBI:15377"/>
        <dbReference type="ChEBI" id="CHEBI:75322"/>
        <dbReference type="ChEBI" id="CHEBI:75326"/>
        <dbReference type="EC" id="4.2.1.152"/>
    </reaction>
    <physiologicalReaction direction="left-to-right" evidence="2">
        <dbReference type="Rhea" id="RHEA:37928"/>
    </physiologicalReaction>
</comment>
<comment type="cofactor">
    <cofactor evidence="4">
        <name>Fe cation</name>
        <dbReference type="ChEBI" id="CHEBI:24875"/>
    </cofactor>
    <text evidence="4">Binds 1 Fe cation per subunit.</text>
</comment>
<comment type="activity regulation">
    <text evidence="12 13">Lipoxygenase activity is activated by 13(S)-HPODE leading to an active free ferric enzyme (PubMed:20921226). The lipoxygenase and hydroperoxide isomerase activities are in competition and are reciprocally regulated by oxygen (PubMed:20923767). The oxygen reacts with an epoxyallylic radical intermediate leading to an epoxyallylic peroxyl radical, which, due to its limited reactivity within the enzyme active site, it dissociates and leaves the enzyme in the activated free ferric state (PubMed:20923767).</text>
</comment>
<comment type="biophysicochemical properties">
    <kinetics>
        <KM evidence="6">46 uM for (12R)-HPETE</KM>
        <KM evidence="6">28 uM for (12S)-HPETE</KM>
        <KM evidence="6">32 uM for (15S)-HPETE</KM>
        <KM evidence="12">50 uM for synthetic fatty acid 9E,11Z,14Z-20:3omega6 (at pH 7.5)</KM>
        <Vmax evidence="6">3.256 umol/min/mg enzyme for (12R)-HPETE (at pH 7.5)</Vmax>
        <Vmax evidence="6">0.858 umol/min/mg enzyme for (12S)-HPETE (at pH 7.5)</Vmax>
        <Vmax evidence="6">0.484 umol/min/mg enzyme for (15S)-HPETE (at pH 7.5)</Vmax>
        <text evidence="6 9">Has a 5 to 10 fold higher activity toward (12R)-HPETE (hydroperoxyeicosatetraenoic acid) compared to (12S)-HPETE and (15S)-HPETE (PubMed:12881489). From (12R)-HPETE produces a stereoisomer of hepoxilin A3 (PubMed:12881489). More active on hydroperoxides with an R configuration than an S one (PubMed:17045234).</text>
    </kinetics>
</comment>
<comment type="pathway">
    <text evidence="6">Lipid metabolism; hydroperoxy eicosatetraenoic acid biosynthesis.</text>
</comment>
<comment type="pathway">
    <text>Lipid metabolism; sphingolipid metabolism.</text>
</comment>
<comment type="interaction">
    <interactant intactId="EBI-6925949">
        <id>Q9BYJ1</id>
    </interactant>
    <interactant intactId="EBI-2833130">
        <id>P48060</id>
        <label>GLIPR1</label>
    </interactant>
    <organismsDiffer>false</organismsDiffer>
    <experiments>2</experiments>
</comment>
<comment type="interaction">
    <interactant intactId="EBI-6925949">
        <id>Q9BYJ1</id>
    </interactant>
    <interactant intactId="EBI-9675802">
        <id>Q6PF18</id>
        <label>MORN3</label>
    </interactant>
    <organismsDiffer>false</organismsDiffer>
    <experiments>2</experiments>
</comment>
<comment type="interaction">
    <interactant intactId="EBI-6925949">
        <id>Q9BYJ1</id>
    </interactant>
    <interactant intactId="EBI-765538">
        <id>P25490</id>
        <label>YY1</label>
    </interactant>
    <organismsDiffer>false</organismsDiffer>
    <experiments>3</experiments>
</comment>
<comment type="interaction">
    <interactant intactId="EBI-6925949">
        <id>Q9BYJ1</id>
    </interactant>
    <interactant intactId="EBI-7254550">
        <id>P36508</id>
        <label>ZNF76</label>
    </interactant>
    <organismsDiffer>false</organismsDiffer>
    <experiments>3</experiments>
</comment>
<comment type="subcellular location">
    <subcellularLocation>
        <location evidence="4">Cytoplasm</location>
    </subcellularLocation>
</comment>
<comment type="alternative products">
    <event type="alternative splicing"/>
    <isoform>
        <id>Q9BYJ1-1</id>
        <name>1</name>
        <sequence type="displayed"/>
    </isoform>
    <isoform>
        <id>Q9BYJ1-2</id>
        <name>2</name>
        <sequence type="described" ref="VSP_043287"/>
    </isoform>
</comment>
<comment type="tissue specificity">
    <text>Predominantly expressed in skin.</text>
</comment>
<comment type="disease" evidence="5 7 8 10 11">
    <disease id="DI-03670">
        <name>Ichthyosis, congenital, autosomal recessive 3</name>
        <acronym>ARCI3</acronym>
        <description>A form of autosomal recessive congenital ichthyosis, a disorder of keratinization with abnormal differentiation and desquamation of the epidermis, resulting in abnormal skin scaling over the whole body. The main skin phenotypes are lamellar ichthyosis (LI) and non-bullous congenital ichthyosiform erythroderma (NCIE), although phenotypic overlap within the same patient or among patients from the same family can occur. Lamellar ichthyosis is a condition often associated with an embedment in a collodion-like membrane at birth; skin scales later develop, covering the entire body surface. Non-bullous congenital ichthyosiform erythroderma characterized by fine whitish scaling on an erythrodermal background; larger brownish scales are present on the buttocks, neck and legs.</description>
        <dbReference type="MIM" id="606545"/>
    </disease>
    <text>The disease is caused by variants affecting the gene represented in this entry.</text>
</comment>
<comment type="similarity">
    <text evidence="16">Belongs to the lipoxygenase family.</text>
</comment>
<comment type="online information" name="Protein Spotlight">
    <link uri="https://www.proteinspotlight.org/back_issues/153/"/>
    <text>about water - Issue 153 of September 2013</text>
</comment>